<protein>
    <recommendedName>
        <fullName>D-galactonate dehydratase family member PC1_4063</fullName>
    </recommendedName>
</protein>
<keyword id="KW-0460">Magnesium</keyword>
<keyword id="KW-0479">Metal-binding</keyword>
<gene>
    <name type="ordered locus">PC1_4063</name>
</gene>
<name>IMAND_PECCP</name>
<reference key="1">
    <citation type="submission" date="2009-07" db="EMBL/GenBank/DDBJ databases">
        <title>Complete sequence of Pectobacterium carotovorum subsp. carotovorum PC1.</title>
        <authorList>
            <consortium name="US DOE Joint Genome Institute"/>
            <person name="Lucas S."/>
            <person name="Copeland A."/>
            <person name="Lapidus A."/>
            <person name="Glavina del Rio T."/>
            <person name="Tice H."/>
            <person name="Bruce D."/>
            <person name="Goodwin L."/>
            <person name="Pitluck S."/>
            <person name="Munk A.C."/>
            <person name="Brettin T."/>
            <person name="Detter J.C."/>
            <person name="Han C."/>
            <person name="Tapia R."/>
            <person name="Larimer F."/>
            <person name="Land M."/>
            <person name="Hauser L."/>
            <person name="Kyrpides N."/>
            <person name="Mikhailova N."/>
            <person name="Balakrishnan V."/>
            <person name="Glasner J."/>
            <person name="Perna N.T."/>
        </authorList>
    </citation>
    <scope>NUCLEOTIDE SEQUENCE [LARGE SCALE GENOMIC DNA]</scope>
    <source>
        <strain>PC1</strain>
    </source>
</reference>
<reference key="2">
    <citation type="journal article" date="2014" name="Biochemistry">
        <title>Discovery of function in the enolase superfamily: D-mannonate and D-gluconate dehydratases in the D-mannonate dehydratase subgroup.</title>
        <authorList>
            <person name="Wichelecki D.J."/>
            <person name="Balthazor B.M."/>
            <person name="Chau A.C."/>
            <person name="Vetting M.W."/>
            <person name="Fedorov A.A."/>
            <person name="Fedorov E.V."/>
            <person name="Lukk T."/>
            <person name="Patskovsky Y.V."/>
            <person name="Stead M.B."/>
            <person name="Hillerich B.S."/>
            <person name="Seidel R.D."/>
            <person name="Almo S.C."/>
            <person name="Gerlt J.A."/>
        </authorList>
    </citation>
    <scope>FUNCTION</scope>
    <scope>LACK OF D-MANNONATE DEHYDRATASE ACTIVITY</scope>
    <source>
        <strain>PC1</strain>
    </source>
</reference>
<comment type="function">
    <text evidence="2">Has no detectable activity with D-mannonate and with a panel of 70 other acid sugars (in vitro), in spite of the conservation of the residues that are expected to be important for catalytic activity and cofactor binding. May have evolved a divergent function.</text>
</comment>
<comment type="similarity">
    <text evidence="3">Belongs to the mandelate racemase/muconate lactonizing enzyme family. GalD subfamily.</text>
</comment>
<sequence>MLPTIITDIECLVTRPDRHNLVTVVVRTDKGITGYGCATFQQRPLAVKAMVDEYLKPLLVGRDANHIEDLWHMMMVNAYWRNGPVINNAVAGVDMALWDIKGKLADMPLYHLFGGKSRDAIAAYSHAASDTLDGLYQDVERLYTQGYRHIRCQLGFYGGNPDTLHSTRQPTEGAYYDQDQYMANTIAMFRALREKYGDRFHILHDVHERLFPNQAVQFAKAVEVYRPYFIEDILPPAQNEWLAQIRSQSAVPLATGELFNNPAEWQNLVINRQIDFIRCHVSQIGGITPALKLGAFCQNFGVRLAWHCPPDMTPIGAAVNIHLNIHLHNAAIQEFVAYPENTRKVFPQAVEPENGYLYPIERSGIGVGIDLDAARQFPVVYRPHEWTQSRLPDGTMHTP</sequence>
<feature type="chain" id="PRO_0000429912" description="D-galactonate dehydratase family member PC1_4063">
    <location>
        <begin position="1"/>
        <end position="399"/>
    </location>
</feature>
<feature type="binding site" evidence="1">
    <location>
        <position position="205"/>
    </location>
    <ligand>
        <name>Mg(2+)</name>
        <dbReference type="ChEBI" id="CHEBI:18420"/>
    </ligand>
</feature>
<feature type="binding site" evidence="1">
    <location>
        <position position="207"/>
    </location>
    <ligand>
        <name>D-arabinonate</name>
        <dbReference type="ChEBI" id="CHEBI:16157"/>
    </ligand>
</feature>
<feature type="binding site" evidence="1">
    <location>
        <position position="231"/>
    </location>
    <ligand>
        <name>Mg(2+)</name>
        <dbReference type="ChEBI" id="CHEBI:18420"/>
    </ligand>
</feature>
<feature type="binding site" evidence="1">
    <location>
        <position position="257"/>
    </location>
    <ligand>
        <name>D-arabinonate</name>
        <dbReference type="ChEBI" id="CHEBI:16157"/>
    </ligand>
</feature>
<feature type="binding site" evidence="1">
    <location>
        <position position="257"/>
    </location>
    <ligand>
        <name>Mg(2+)</name>
        <dbReference type="ChEBI" id="CHEBI:18420"/>
    </ligand>
</feature>
<feature type="binding site" evidence="1">
    <location>
        <position position="278"/>
    </location>
    <ligand>
        <name>D-arabinonate</name>
        <dbReference type="ChEBI" id="CHEBI:16157"/>
    </ligand>
</feature>
<feature type="binding site" evidence="1">
    <location>
        <position position="307"/>
    </location>
    <ligand>
        <name>D-arabinonate</name>
        <dbReference type="ChEBI" id="CHEBI:16157"/>
    </ligand>
</feature>
<feature type="binding site" evidence="1">
    <location>
        <position position="334"/>
    </location>
    <ligand>
        <name>D-arabinonate</name>
        <dbReference type="ChEBI" id="CHEBI:16157"/>
    </ligand>
</feature>
<accession>C6DI84</accession>
<evidence type="ECO:0000250" key="1"/>
<evidence type="ECO:0000269" key="2">
    <source>
    </source>
</evidence>
<evidence type="ECO:0000305" key="3"/>
<proteinExistence type="inferred from homology"/>
<organism>
    <name type="scientific">Pectobacterium carotovorum subsp. carotovorum (strain PC1)</name>
    <dbReference type="NCBI Taxonomy" id="561230"/>
    <lineage>
        <taxon>Bacteria</taxon>
        <taxon>Pseudomonadati</taxon>
        <taxon>Pseudomonadota</taxon>
        <taxon>Gammaproteobacteria</taxon>
        <taxon>Enterobacterales</taxon>
        <taxon>Pectobacteriaceae</taxon>
        <taxon>Pectobacterium</taxon>
    </lineage>
</organism>
<dbReference type="EMBL" id="CP001657">
    <property type="protein sequence ID" value="ACT15078.1"/>
    <property type="molecule type" value="Genomic_DNA"/>
</dbReference>
<dbReference type="RefSeq" id="WP_015842155.1">
    <property type="nucleotide sequence ID" value="NC_012917.1"/>
</dbReference>
<dbReference type="SMR" id="C6DI84"/>
<dbReference type="STRING" id="561230.PC1_4063"/>
<dbReference type="KEGG" id="pct:PC1_4063"/>
<dbReference type="eggNOG" id="COG4948">
    <property type="taxonomic scope" value="Bacteria"/>
</dbReference>
<dbReference type="HOGENOM" id="CLU_030273_6_1_6"/>
<dbReference type="OrthoDB" id="103536at2"/>
<dbReference type="Proteomes" id="UP000002736">
    <property type="component" value="Chromosome"/>
</dbReference>
<dbReference type="GO" id="GO:0000287">
    <property type="term" value="F:magnesium ion binding"/>
    <property type="evidence" value="ECO:0000250"/>
    <property type="project" value="UniProtKB"/>
</dbReference>
<dbReference type="GO" id="GO:0009063">
    <property type="term" value="P:amino acid catabolic process"/>
    <property type="evidence" value="ECO:0007669"/>
    <property type="project" value="InterPro"/>
</dbReference>
<dbReference type="FunFam" id="3.20.20.120:FF:000011">
    <property type="entry name" value="D-galactonate dehydratase family member VSWAT3_13707"/>
    <property type="match status" value="1"/>
</dbReference>
<dbReference type="FunFam" id="3.30.390.10:FF:000002">
    <property type="entry name" value="D-galactonate dehydratase family protein"/>
    <property type="match status" value="1"/>
</dbReference>
<dbReference type="Gene3D" id="3.20.20.120">
    <property type="entry name" value="Enolase-like C-terminal domain"/>
    <property type="match status" value="1"/>
</dbReference>
<dbReference type="Gene3D" id="3.30.390.10">
    <property type="entry name" value="Enolase-like, N-terminal domain"/>
    <property type="match status" value="1"/>
</dbReference>
<dbReference type="InterPro" id="IPR034589">
    <property type="entry name" value="D-mannonate_dehydratase-like"/>
</dbReference>
<dbReference type="InterPro" id="IPR034593">
    <property type="entry name" value="DgoD-like"/>
</dbReference>
<dbReference type="InterPro" id="IPR036849">
    <property type="entry name" value="Enolase-like_C_sf"/>
</dbReference>
<dbReference type="InterPro" id="IPR029017">
    <property type="entry name" value="Enolase-like_N"/>
</dbReference>
<dbReference type="InterPro" id="IPR029065">
    <property type="entry name" value="Enolase_C-like"/>
</dbReference>
<dbReference type="InterPro" id="IPR018110">
    <property type="entry name" value="Mandel_Rmase/mucon_lact_enz_CS"/>
</dbReference>
<dbReference type="InterPro" id="IPR013342">
    <property type="entry name" value="Mandelate_racemase_C"/>
</dbReference>
<dbReference type="InterPro" id="IPR013341">
    <property type="entry name" value="Mandelate_racemase_N_dom"/>
</dbReference>
<dbReference type="PANTHER" id="PTHR48080">
    <property type="entry name" value="D-GALACTONATE DEHYDRATASE-RELATED"/>
    <property type="match status" value="1"/>
</dbReference>
<dbReference type="PANTHER" id="PTHR48080:SF6">
    <property type="entry name" value="STARVATION-SENSING PROTEIN RSPA"/>
    <property type="match status" value="1"/>
</dbReference>
<dbReference type="Pfam" id="PF13378">
    <property type="entry name" value="MR_MLE_C"/>
    <property type="match status" value="1"/>
</dbReference>
<dbReference type="Pfam" id="PF02746">
    <property type="entry name" value="MR_MLE_N"/>
    <property type="match status" value="1"/>
</dbReference>
<dbReference type="SFLD" id="SFLDS00001">
    <property type="entry name" value="Enolase"/>
    <property type="match status" value="1"/>
</dbReference>
<dbReference type="SFLD" id="SFLDG00033">
    <property type="entry name" value="mannonate_dehydratase"/>
    <property type="match status" value="1"/>
</dbReference>
<dbReference type="SMART" id="SM00922">
    <property type="entry name" value="MR_MLE"/>
    <property type="match status" value="1"/>
</dbReference>
<dbReference type="SUPFAM" id="SSF51604">
    <property type="entry name" value="Enolase C-terminal domain-like"/>
    <property type="match status" value="1"/>
</dbReference>
<dbReference type="SUPFAM" id="SSF54826">
    <property type="entry name" value="Enolase N-terminal domain-like"/>
    <property type="match status" value="1"/>
</dbReference>
<dbReference type="PROSITE" id="PS00908">
    <property type="entry name" value="MR_MLE_1"/>
    <property type="match status" value="1"/>
</dbReference>